<feature type="chain" id="PRO_1000073592" description="Proline--tRNA ligase">
    <location>
        <begin position="1"/>
        <end position="567"/>
    </location>
</feature>
<accession>A6QGG3</accession>
<evidence type="ECO:0000255" key="1">
    <source>
        <dbReference type="HAMAP-Rule" id="MF_01569"/>
    </source>
</evidence>
<comment type="function">
    <text evidence="1">Catalyzes the attachment of proline to tRNA(Pro) in a two-step reaction: proline is first activated by ATP to form Pro-AMP and then transferred to the acceptor end of tRNA(Pro). As ProRS can inadvertently accommodate and process non-cognate amino acids such as alanine and cysteine, to avoid such errors it has two additional distinct editing activities against alanine. One activity is designated as 'pretransfer' editing and involves the tRNA(Pro)-independent hydrolysis of activated Ala-AMP. The other activity is designated 'posttransfer' editing and involves deacylation of mischarged Ala-tRNA(Pro). The misacylated Cys-tRNA(Pro) is not edited by ProRS.</text>
</comment>
<comment type="catalytic activity">
    <reaction evidence="1">
        <text>tRNA(Pro) + L-proline + ATP = L-prolyl-tRNA(Pro) + AMP + diphosphate</text>
        <dbReference type="Rhea" id="RHEA:14305"/>
        <dbReference type="Rhea" id="RHEA-COMP:9700"/>
        <dbReference type="Rhea" id="RHEA-COMP:9702"/>
        <dbReference type="ChEBI" id="CHEBI:30616"/>
        <dbReference type="ChEBI" id="CHEBI:33019"/>
        <dbReference type="ChEBI" id="CHEBI:60039"/>
        <dbReference type="ChEBI" id="CHEBI:78442"/>
        <dbReference type="ChEBI" id="CHEBI:78532"/>
        <dbReference type="ChEBI" id="CHEBI:456215"/>
        <dbReference type="EC" id="6.1.1.15"/>
    </reaction>
</comment>
<comment type="subunit">
    <text evidence="1">Homodimer.</text>
</comment>
<comment type="subcellular location">
    <subcellularLocation>
        <location evidence="1">Cytoplasm</location>
    </subcellularLocation>
</comment>
<comment type="domain">
    <text evidence="1">Consists of three domains: the N-terminal catalytic domain, the editing domain and the C-terminal anticodon-binding domain.</text>
</comment>
<comment type="similarity">
    <text evidence="1">Belongs to the class-II aminoacyl-tRNA synthetase family. ProS type 1 subfamily.</text>
</comment>
<keyword id="KW-0030">Aminoacyl-tRNA synthetase</keyword>
<keyword id="KW-0067">ATP-binding</keyword>
<keyword id="KW-0963">Cytoplasm</keyword>
<keyword id="KW-0436">Ligase</keyword>
<keyword id="KW-0547">Nucleotide-binding</keyword>
<keyword id="KW-0648">Protein biosynthesis</keyword>
<sequence>MKQSKVFIPTMRDVPSEAEAQSHRLLLKSGLIKQSTSGIYSYLPLATRVLNNITAIVRQEMERIDSVEILMPALQQAELWEESGRWGAYGPELMRLQDRHGRQFALGPTHEELVTSIVRNELKSYKQLPMTLFQIQSKFRDEKRPRFGLLRGREFIMKDAYSFHADEASLDQTYQDMYQAYSRIFERVGINARPVVADSGAIGGSHTHEFMALSAIGEDTIVYSKESDYAANIEKAEVVYEPNHKHTTVQPLEKIETPNVKTAQELADFLGRPVDEIVKTMIFKVDGEYIMVLVRGHHEINDIKLKSYFGTDNIELATQDEIVNLVGANPGSLGPVIDKEIKIYADNFVQDLNNLVVGANEDGYHLINVNVGRDFNVDEYGDFRFILEGEKLSDGSGVAHFAEGIEVGQVFKLGTKYSESMNATFLDNQGKAQSLIMGCYGIGISRTLSAIVEQNHDDNGIVWPKSVTPFDLHLISINPKKDDQRELADALYAEFNTKFDVLYDDRQERAGVKFNDADLIGLPLRIVVGKRASEGIVEVKERLTGDSEEVHIDDLMTVITNKYDNLK</sequence>
<dbReference type="EC" id="6.1.1.15" evidence="1"/>
<dbReference type="EMBL" id="AP009351">
    <property type="protein sequence ID" value="BAF67445.1"/>
    <property type="molecule type" value="Genomic_DNA"/>
</dbReference>
<dbReference type="RefSeq" id="WP_000814103.1">
    <property type="nucleotide sequence ID" value="NZ_JBBIAE010000001.1"/>
</dbReference>
<dbReference type="SMR" id="A6QGG3"/>
<dbReference type="KEGG" id="sae:NWMN_1173"/>
<dbReference type="HOGENOM" id="CLU_016739_0_0_9"/>
<dbReference type="Proteomes" id="UP000006386">
    <property type="component" value="Chromosome"/>
</dbReference>
<dbReference type="GO" id="GO:0005829">
    <property type="term" value="C:cytosol"/>
    <property type="evidence" value="ECO:0007669"/>
    <property type="project" value="TreeGrafter"/>
</dbReference>
<dbReference type="GO" id="GO:0002161">
    <property type="term" value="F:aminoacyl-tRNA deacylase activity"/>
    <property type="evidence" value="ECO:0007669"/>
    <property type="project" value="InterPro"/>
</dbReference>
<dbReference type="GO" id="GO:0005524">
    <property type="term" value="F:ATP binding"/>
    <property type="evidence" value="ECO:0007669"/>
    <property type="project" value="UniProtKB-UniRule"/>
</dbReference>
<dbReference type="GO" id="GO:0140096">
    <property type="term" value="F:catalytic activity, acting on a protein"/>
    <property type="evidence" value="ECO:0007669"/>
    <property type="project" value="UniProtKB-ARBA"/>
</dbReference>
<dbReference type="GO" id="GO:0004827">
    <property type="term" value="F:proline-tRNA ligase activity"/>
    <property type="evidence" value="ECO:0007669"/>
    <property type="project" value="UniProtKB-UniRule"/>
</dbReference>
<dbReference type="GO" id="GO:0016740">
    <property type="term" value="F:transferase activity"/>
    <property type="evidence" value="ECO:0007669"/>
    <property type="project" value="UniProtKB-ARBA"/>
</dbReference>
<dbReference type="GO" id="GO:0006433">
    <property type="term" value="P:prolyl-tRNA aminoacylation"/>
    <property type="evidence" value="ECO:0007669"/>
    <property type="project" value="UniProtKB-UniRule"/>
</dbReference>
<dbReference type="CDD" id="cd04334">
    <property type="entry name" value="ProRS-INS"/>
    <property type="match status" value="1"/>
</dbReference>
<dbReference type="CDD" id="cd00861">
    <property type="entry name" value="ProRS_anticodon_short"/>
    <property type="match status" value="1"/>
</dbReference>
<dbReference type="CDD" id="cd00779">
    <property type="entry name" value="ProRS_core_prok"/>
    <property type="match status" value="1"/>
</dbReference>
<dbReference type="FunFam" id="3.30.930.10:FF:000043">
    <property type="entry name" value="Proline--tRNA ligase"/>
    <property type="match status" value="1"/>
</dbReference>
<dbReference type="FunFam" id="3.40.50.800:FF:000011">
    <property type="entry name" value="Proline--tRNA ligase"/>
    <property type="match status" value="1"/>
</dbReference>
<dbReference type="Gene3D" id="3.40.50.800">
    <property type="entry name" value="Anticodon-binding domain"/>
    <property type="match status" value="1"/>
</dbReference>
<dbReference type="Gene3D" id="3.30.930.10">
    <property type="entry name" value="Bira Bifunctional Protein, Domain 2"/>
    <property type="match status" value="2"/>
</dbReference>
<dbReference type="Gene3D" id="3.90.960.10">
    <property type="entry name" value="YbaK/aminoacyl-tRNA synthetase-associated domain"/>
    <property type="match status" value="1"/>
</dbReference>
<dbReference type="HAMAP" id="MF_01569">
    <property type="entry name" value="Pro_tRNA_synth_type1"/>
    <property type="match status" value="1"/>
</dbReference>
<dbReference type="InterPro" id="IPR002314">
    <property type="entry name" value="aa-tRNA-synt_IIb"/>
</dbReference>
<dbReference type="InterPro" id="IPR006195">
    <property type="entry name" value="aa-tRNA-synth_II"/>
</dbReference>
<dbReference type="InterPro" id="IPR045864">
    <property type="entry name" value="aa-tRNA-synth_II/BPL/LPL"/>
</dbReference>
<dbReference type="InterPro" id="IPR004154">
    <property type="entry name" value="Anticodon-bd"/>
</dbReference>
<dbReference type="InterPro" id="IPR036621">
    <property type="entry name" value="Anticodon-bd_dom_sf"/>
</dbReference>
<dbReference type="InterPro" id="IPR002316">
    <property type="entry name" value="Pro-tRNA-ligase_IIa"/>
</dbReference>
<dbReference type="InterPro" id="IPR004500">
    <property type="entry name" value="Pro-tRNA-synth_IIa_bac-type"/>
</dbReference>
<dbReference type="InterPro" id="IPR023717">
    <property type="entry name" value="Pro-tRNA-Synthase_IIa_type1"/>
</dbReference>
<dbReference type="InterPro" id="IPR050062">
    <property type="entry name" value="Pro-tRNA_synthetase"/>
</dbReference>
<dbReference type="InterPro" id="IPR044140">
    <property type="entry name" value="ProRS_anticodon_short"/>
</dbReference>
<dbReference type="InterPro" id="IPR033730">
    <property type="entry name" value="ProRS_core_prok"/>
</dbReference>
<dbReference type="InterPro" id="IPR036754">
    <property type="entry name" value="YbaK/aa-tRNA-synt-asso_dom_sf"/>
</dbReference>
<dbReference type="InterPro" id="IPR007214">
    <property type="entry name" value="YbaK/aa-tRNA-synth-assoc-dom"/>
</dbReference>
<dbReference type="NCBIfam" id="NF006625">
    <property type="entry name" value="PRK09194.1"/>
    <property type="match status" value="1"/>
</dbReference>
<dbReference type="NCBIfam" id="TIGR00409">
    <property type="entry name" value="proS_fam_II"/>
    <property type="match status" value="1"/>
</dbReference>
<dbReference type="PANTHER" id="PTHR42753">
    <property type="entry name" value="MITOCHONDRIAL RIBOSOME PROTEIN L39/PROLYL-TRNA LIGASE FAMILY MEMBER"/>
    <property type="match status" value="1"/>
</dbReference>
<dbReference type="PANTHER" id="PTHR42753:SF2">
    <property type="entry name" value="PROLINE--TRNA LIGASE"/>
    <property type="match status" value="1"/>
</dbReference>
<dbReference type="Pfam" id="PF03129">
    <property type="entry name" value="HGTP_anticodon"/>
    <property type="match status" value="1"/>
</dbReference>
<dbReference type="Pfam" id="PF00587">
    <property type="entry name" value="tRNA-synt_2b"/>
    <property type="match status" value="1"/>
</dbReference>
<dbReference type="Pfam" id="PF04073">
    <property type="entry name" value="tRNA_edit"/>
    <property type="match status" value="1"/>
</dbReference>
<dbReference type="PRINTS" id="PR01046">
    <property type="entry name" value="TRNASYNTHPRO"/>
</dbReference>
<dbReference type="SUPFAM" id="SSF52954">
    <property type="entry name" value="Class II aaRS ABD-related"/>
    <property type="match status" value="1"/>
</dbReference>
<dbReference type="SUPFAM" id="SSF55681">
    <property type="entry name" value="Class II aaRS and biotin synthetases"/>
    <property type="match status" value="1"/>
</dbReference>
<dbReference type="SUPFAM" id="SSF55826">
    <property type="entry name" value="YbaK/ProRS associated domain"/>
    <property type="match status" value="1"/>
</dbReference>
<dbReference type="PROSITE" id="PS50862">
    <property type="entry name" value="AA_TRNA_LIGASE_II"/>
    <property type="match status" value="1"/>
</dbReference>
<proteinExistence type="inferred from homology"/>
<name>SYP_STAAE</name>
<organism>
    <name type="scientific">Staphylococcus aureus (strain Newman)</name>
    <dbReference type="NCBI Taxonomy" id="426430"/>
    <lineage>
        <taxon>Bacteria</taxon>
        <taxon>Bacillati</taxon>
        <taxon>Bacillota</taxon>
        <taxon>Bacilli</taxon>
        <taxon>Bacillales</taxon>
        <taxon>Staphylococcaceae</taxon>
        <taxon>Staphylococcus</taxon>
    </lineage>
</organism>
<protein>
    <recommendedName>
        <fullName evidence="1">Proline--tRNA ligase</fullName>
        <ecNumber evidence="1">6.1.1.15</ecNumber>
    </recommendedName>
    <alternativeName>
        <fullName evidence="1">Prolyl-tRNA synthetase</fullName>
        <shortName evidence="1">ProRS</shortName>
    </alternativeName>
</protein>
<reference key="1">
    <citation type="journal article" date="2008" name="J. Bacteriol.">
        <title>Genome sequence of Staphylococcus aureus strain Newman and comparative analysis of staphylococcal genomes: polymorphism and evolution of two major pathogenicity islands.</title>
        <authorList>
            <person name="Baba T."/>
            <person name="Bae T."/>
            <person name="Schneewind O."/>
            <person name="Takeuchi F."/>
            <person name="Hiramatsu K."/>
        </authorList>
    </citation>
    <scope>NUCLEOTIDE SEQUENCE [LARGE SCALE GENOMIC DNA]</scope>
    <source>
        <strain>Newman</strain>
    </source>
</reference>
<gene>
    <name evidence="1" type="primary">proS</name>
    <name type="ordered locus">NWMN_1173</name>
</gene>